<organism>
    <name type="scientific">Bovine herpesvirus 4 (strain DN-599)</name>
    <name type="common">BoHV-4</name>
    <name type="synonym">Movar virus</name>
    <dbReference type="NCBI Taxonomy" id="10355"/>
    <lineage>
        <taxon>Viruses</taxon>
        <taxon>Duplodnaviria</taxon>
        <taxon>Heunggongvirae</taxon>
        <taxon>Peploviricota</taxon>
        <taxon>Herviviricetes</taxon>
        <taxon>Herpesvirales</taxon>
        <taxon>Orthoherpesviridae</taxon>
        <taxon>Gammaherpesvirinae</taxon>
        <taxon>Rhadinovirus</taxon>
        <taxon>Rhadinovirus bovinegamma4</taxon>
    </lineage>
</organism>
<name>VIE1_BHV4D</name>
<proteinExistence type="inferred from homology"/>
<accession>P27426</accession>
<gene>
    <name type="primary">IE1</name>
</gene>
<organismHost>
    <name type="scientific">Bos taurus</name>
    <name type="common">Bovine</name>
    <dbReference type="NCBI Taxonomy" id="9913"/>
</organismHost>
<organismHost>
    <name type="scientific">Felis catus</name>
    <name type="common">Cat</name>
    <name type="synonym">Felis silvestris catus</name>
    <dbReference type="NCBI Taxonomy" id="9685"/>
</organismHost>
<organismHost>
    <name type="scientific">Panthera leo</name>
    <name type="common">Lion</name>
    <dbReference type="NCBI Taxonomy" id="9689"/>
</organismHost>
<protein>
    <recommendedName>
        <fullName>Probable E3 ubiquitin-protein ligase IE1</fullName>
        <ecNumber>2.3.2.27</ecNumber>
    </recommendedName>
    <alternativeName>
        <fullName>32.7 kDa immediate early protein IE1</fullName>
    </alternativeName>
    <alternativeName>
        <fullName>RING-type E3 ubiquitin transferase IE1</fullName>
    </alternativeName>
</protein>
<keyword id="KW-0238">DNA-binding</keyword>
<keyword id="KW-0244">Early protein</keyword>
<keyword id="KW-0472">Membrane</keyword>
<keyword id="KW-0479">Metal-binding</keyword>
<keyword id="KW-0804">Transcription</keyword>
<keyword id="KW-0805">Transcription regulation</keyword>
<keyword id="KW-0808">Transferase</keyword>
<keyword id="KW-0812">Transmembrane</keyword>
<keyword id="KW-1133">Transmembrane helix</keyword>
<keyword id="KW-0833">Ubl conjugation pathway</keyword>
<keyword id="KW-0862">Zinc</keyword>
<keyword id="KW-0863">Zinc-finger</keyword>
<feature type="chain" id="PRO_0000056349" description="Probable E3 ubiquitin-protein ligase IE1">
    <location>
        <begin position="1"/>
        <end position="285"/>
    </location>
</feature>
<feature type="topological domain" description="Cytoplasmic" evidence="1">
    <location>
        <begin position="1"/>
        <end position="201"/>
    </location>
</feature>
<feature type="transmembrane region" description="Helical" evidence="1">
    <location>
        <begin position="202"/>
        <end position="222"/>
    </location>
</feature>
<feature type="topological domain" description="Extracellular" evidence="1">
    <location>
        <begin position="223"/>
        <end position="238"/>
    </location>
</feature>
<feature type="transmembrane region" description="Helical" evidence="1">
    <location>
        <begin position="239"/>
        <end position="259"/>
    </location>
</feature>
<feature type="topological domain" description="Cytoplasmic" evidence="1">
    <location>
        <begin position="260"/>
        <end position="285"/>
    </location>
</feature>
<feature type="zinc finger region" description="RING-CH-type" evidence="2">
    <location>
        <begin position="124"/>
        <end position="183"/>
    </location>
</feature>
<feature type="binding site" evidence="2">
    <location>
        <position position="132"/>
    </location>
    <ligand>
        <name>Zn(2+)</name>
        <dbReference type="ChEBI" id="CHEBI:29105"/>
        <label>1</label>
    </ligand>
</feature>
<feature type="binding site" evidence="2">
    <location>
        <position position="135"/>
    </location>
    <ligand>
        <name>Zn(2+)</name>
        <dbReference type="ChEBI" id="CHEBI:29105"/>
        <label>1</label>
    </ligand>
</feature>
<feature type="binding site" evidence="2">
    <location>
        <position position="147"/>
    </location>
    <ligand>
        <name>Zn(2+)</name>
        <dbReference type="ChEBI" id="CHEBI:29105"/>
        <label>2</label>
    </ligand>
</feature>
<feature type="binding site" evidence="2">
    <location>
        <position position="149"/>
    </location>
    <ligand>
        <name>Zn(2+)</name>
        <dbReference type="ChEBI" id="CHEBI:29105"/>
        <label>2</label>
    </ligand>
</feature>
<feature type="binding site" evidence="2">
    <location>
        <position position="157"/>
    </location>
    <ligand>
        <name>Zn(2+)</name>
        <dbReference type="ChEBI" id="CHEBI:29105"/>
        <label>1</label>
    </ligand>
</feature>
<feature type="binding site" evidence="2">
    <location>
        <position position="160"/>
    </location>
    <ligand>
        <name>Zn(2+)</name>
        <dbReference type="ChEBI" id="CHEBI:29105"/>
        <label>1</label>
    </ligand>
</feature>
<feature type="binding site" evidence="2">
    <location>
        <position position="173"/>
    </location>
    <ligand>
        <name>Zn(2+)</name>
        <dbReference type="ChEBI" id="CHEBI:29105"/>
        <label>2</label>
    </ligand>
</feature>
<feature type="binding site" evidence="2">
    <location>
        <position position="176"/>
    </location>
    <ligand>
        <name>Zn(2+)</name>
        <dbReference type="ChEBI" id="CHEBI:29105"/>
        <label>2</label>
    </ligand>
</feature>
<comment type="function">
    <text evidence="3">Controls the expression of later classes of genes and also of the IE genes (Potential). E3 ubiquitin-protein ligase (Probable). E3 ubiquitin ligases accept ubiquitin from an E2 ubiquitin-conjugating enzyme in the form of a thioester and then directly transfer the ubiquitin to targeted substrates.</text>
</comment>
<comment type="catalytic activity">
    <reaction>
        <text>S-ubiquitinyl-[E2 ubiquitin-conjugating enzyme]-L-cysteine + [acceptor protein]-L-lysine = [E2 ubiquitin-conjugating enzyme]-L-cysteine + N(6)-ubiquitinyl-[acceptor protein]-L-lysine.</text>
        <dbReference type="EC" id="2.3.2.27"/>
    </reaction>
</comment>
<comment type="pathway">
    <text>Protein modification; protein ubiquitination.</text>
</comment>
<comment type="subcellular location">
    <subcellularLocation>
        <location evidence="3">Membrane</location>
        <topology evidence="3">Multi-pass membrane protein</topology>
    </subcellularLocation>
</comment>
<comment type="domain">
    <text evidence="2">The RING-CH-type zinc finger domain is required for E3 ligase activity.</text>
</comment>
<sequence>MASKDSDVRCVKCQSLKPTTPLTGQDRCARCVAINELKPWISTCNINPCYDGDLSESNETIEMMDINSCREDTPSDAESETRFMPFVAHSKQPKHTSKNPTKGEIQYFPVEKCKDIHRVENQSSIDEEGKQCWICRDGESLPEARYCNCYGDLQYCHEECLKTWISMSGEKKCKFCQTPYKVNRQLSLKRGLPGYWDRDDRFVFIAGFIGMGTILAGWIASFFYLLVVLCGKYFTYKDVMIVVGGLAIIQVVGLMFSLFMYFQIGNLLRQYINYMTETNIDPLRT</sequence>
<dbReference type="EC" id="2.3.2.27"/>
<dbReference type="EMBL" id="M60043">
    <property type="protein sequence ID" value="AAA96266.1"/>
    <property type="molecule type" value="Genomic_DNA"/>
</dbReference>
<dbReference type="PIR" id="A40504">
    <property type="entry name" value="EDBED9"/>
</dbReference>
<dbReference type="RefSeq" id="NP_076504.1">
    <property type="nucleotide sequence ID" value="NC_002665.1"/>
</dbReference>
<dbReference type="SMR" id="P27426"/>
<dbReference type="KEGG" id="vg:1684910"/>
<dbReference type="UniPathway" id="UPA00143"/>
<dbReference type="GO" id="GO:0016020">
    <property type="term" value="C:membrane"/>
    <property type="evidence" value="ECO:0007669"/>
    <property type="project" value="UniProtKB-SubCell"/>
</dbReference>
<dbReference type="GO" id="GO:0003677">
    <property type="term" value="F:DNA binding"/>
    <property type="evidence" value="ECO:0007669"/>
    <property type="project" value="UniProtKB-KW"/>
</dbReference>
<dbReference type="GO" id="GO:0016740">
    <property type="term" value="F:transferase activity"/>
    <property type="evidence" value="ECO:0007669"/>
    <property type="project" value="UniProtKB-KW"/>
</dbReference>
<dbReference type="GO" id="GO:0008270">
    <property type="term" value="F:zinc ion binding"/>
    <property type="evidence" value="ECO:0007669"/>
    <property type="project" value="UniProtKB-KW"/>
</dbReference>
<dbReference type="GO" id="GO:0016567">
    <property type="term" value="P:protein ubiquitination"/>
    <property type="evidence" value="ECO:0007669"/>
    <property type="project" value="UniProtKB-UniPathway"/>
</dbReference>
<dbReference type="CDD" id="cd16495">
    <property type="entry name" value="RING_CH-C4HC3_MARCH"/>
    <property type="match status" value="1"/>
</dbReference>
<dbReference type="Gene3D" id="3.30.40.10">
    <property type="entry name" value="Zinc/RING finger domain, C3HC4 (zinc finger)"/>
    <property type="match status" value="1"/>
</dbReference>
<dbReference type="InterPro" id="IPR011016">
    <property type="entry name" value="Znf_RING-CH"/>
</dbReference>
<dbReference type="InterPro" id="IPR013083">
    <property type="entry name" value="Znf_RING/FYVE/PHD"/>
</dbReference>
<dbReference type="PANTHER" id="PTHR46065">
    <property type="entry name" value="E3 UBIQUITIN-PROTEIN LIGASE MARCH 2/3 FAMILY MEMBER"/>
    <property type="match status" value="1"/>
</dbReference>
<dbReference type="PANTHER" id="PTHR46065:SF3">
    <property type="entry name" value="FI20425P1"/>
    <property type="match status" value="1"/>
</dbReference>
<dbReference type="Pfam" id="PF12906">
    <property type="entry name" value="RINGv"/>
    <property type="match status" value="1"/>
</dbReference>
<dbReference type="SMART" id="SM00744">
    <property type="entry name" value="RINGv"/>
    <property type="match status" value="1"/>
</dbReference>
<dbReference type="SUPFAM" id="SSF57850">
    <property type="entry name" value="RING/U-box"/>
    <property type="match status" value="1"/>
</dbReference>
<dbReference type="PROSITE" id="PS51292">
    <property type="entry name" value="ZF_RING_CH"/>
    <property type="match status" value="1"/>
</dbReference>
<reference key="1">
    <citation type="journal article" date="1991" name="J. Virol.">
        <title>Characterization of the bovine herpesvirus 4 major immediate-early transcript.</title>
        <authorList>
            <person name="van Santen V.L."/>
        </authorList>
    </citation>
    <scope>NUCLEOTIDE SEQUENCE [GENOMIC DNA]</scope>
</reference>
<evidence type="ECO:0000255" key="1"/>
<evidence type="ECO:0000255" key="2">
    <source>
        <dbReference type="PROSITE-ProRule" id="PRU00623"/>
    </source>
</evidence>
<evidence type="ECO:0000305" key="3"/>